<sequence length="143" mass="15065">MAKKIVGYIKLQVPAGKANPSPPIGPALGQRGLNIMEFCKAFNAQTQGVEPGLPIPVVITAYADKSFTFIMKTPPATILIKKAAGVQKGSPKPHTDKVGKLNRTQLEEIAKTKQPDLTAADMDAAVRTIAGSARSMGIEVEGV</sequence>
<protein>
    <recommendedName>
        <fullName evidence="1">Large ribosomal subunit protein uL11</fullName>
    </recommendedName>
    <alternativeName>
        <fullName evidence="2">50S ribosomal protein L11</fullName>
    </alternativeName>
</protein>
<organism>
    <name type="scientific">Laribacter hongkongensis (strain HLHK9)</name>
    <dbReference type="NCBI Taxonomy" id="557598"/>
    <lineage>
        <taxon>Bacteria</taxon>
        <taxon>Pseudomonadati</taxon>
        <taxon>Pseudomonadota</taxon>
        <taxon>Betaproteobacteria</taxon>
        <taxon>Neisseriales</taxon>
        <taxon>Aquaspirillaceae</taxon>
        <taxon>Laribacter</taxon>
    </lineage>
</organism>
<gene>
    <name evidence="1" type="primary">rplK</name>
    <name type="ordered locus">LHK_00242</name>
</gene>
<feature type="chain" id="PRO_1000195659" description="Large ribosomal subunit protein uL11">
    <location>
        <begin position="1"/>
        <end position="143"/>
    </location>
</feature>
<reference key="1">
    <citation type="journal article" date="2009" name="PLoS Genet.">
        <title>The complete genome and proteome of Laribacter hongkongensis reveal potential mechanisms for adaptations to different temperatures and habitats.</title>
        <authorList>
            <person name="Woo P.C.Y."/>
            <person name="Lau S.K.P."/>
            <person name="Tse H."/>
            <person name="Teng J.L.L."/>
            <person name="Curreem S.O."/>
            <person name="Tsang A.K.L."/>
            <person name="Fan R.Y.Y."/>
            <person name="Wong G.K.M."/>
            <person name="Huang Y."/>
            <person name="Loman N.J."/>
            <person name="Snyder L.A.S."/>
            <person name="Cai J.J."/>
            <person name="Huang J.-D."/>
            <person name="Mak W."/>
            <person name="Pallen M.J."/>
            <person name="Lok S."/>
            <person name="Yuen K.-Y."/>
        </authorList>
    </citation>
    <scope>NUCLEOTIDE SEQUENCE [LARGE SCALE GENOMIC DNA]</scope>
    <source>
        <strain>HLHK9</strain>
    </source>
</reference>
<evidence type="ECO:0000255" key="1">
    <source>
        <dbReference type="HAMAP-Rule" id="MF_00736"/>
    </source>
</evidence>
<evidence type="ECO:0000305" key="2"/>
<keyword id="KW-0488">Methylation</keyword>
<keyword id="KW-1185">Reference proteome</keyword>
<keyword id="KW-0687">Ribonucleoprotein</keyword>
<keyword id="KW-0689">Ribosomal protein</keyword>
<keyword id="KW-0694">RNA-binding</keyword>
<keyword id="KW-0699">rRNA-binding</keyword>
<comment type="function">
    <text evidence="1">Forms part of the ribosomal stalk which helps the ribosome interact with GTP-bound translation factors.</text>
</comment>
<comment type="subunit">
    <text evidence="1">Part of the ribosomal stalk of the 50S ribosomal subunit. Interacts with L10 and the large rRNA to form the base of the stalk. L10 forms an elongated spine to which L12 dimers bind in a sequential fashion forming a multimeric L10(L12)X complex.</text>
</comment>
<comment type="PTM">
    <text evidence="1">One or more lysine residues are methylated.</text>
</comment>
<comment type="similarity">
    <text evidence="1">Belongs to the universal ribosomal protein uL11 family.</text>
</comment>
<accession>C1DAQ6</accession>
<dbReference type="EMBL" id="CP001154">
    <property type="protein sequence ID" value="ACO73237.1"/>
    <property type="molecule type" value="Genomic_DNA"/>
</dbReference>
<dbReference type="RefSeq" id="WP_012695732.1">
    <property type="nucleotide sequence ID" value="NC_012559.1"/>
</dbReference>
<dbReference type="SMR" id="C1DAQ6"/>
<dbReference type="STRING" id="557598.LHK_00242"/>
<dbReference type="KEGG" id="lhk:LHK_00242"/>
<dbReference type="eggNOG" id="COG0080">
    <property type="taxonomic scope" value="Bacteria"/>
</dbReference>
<dbReference type="HOGENOM" id="CLU_074237_2_0_4"/>
<dbReference type="Proteomes" id="UP000002010">
    <property type="component" value="Chromosome"/>
</dbReference>
<dbReference type="GO" id="GO:0022625">
    <property type="term" value="C:cytosolic large ribosomal subunit"/>
    <property type="evidence" value="ECO:0007669"/>
    <property type="project" value="TreeGrafter"/>
</dbReference>
<dbReference type="GO" id="GO:0070180">
    <property type="term" value="F:large ribosomal subunit rRNA binding"/>
    <property type="evidence" value="ECO:0007669"/>
    <property type="project" value="UniProtKB-UniRule"/>
</dbReference>
<dbReference type="GO" id="GO:0003735">
    <property type="term" value="F:structural constituent of ribosome"/>
    <property type="evidence" value="ECO:0007669"/>
    <property type="project" value="InterPro"/>
</dbReference>
<dbReference type="GO" id="GO:0006412">
    <property type="term" value="P:translation"/>
    <property type="evidence" value="ECO:0007669"/>
    <property type="project" value="UniProtKB-UniRule"/>
</dbReference>
<dbReference type="CDD" id="cd00349">
    <property type="entry name" value="Ribosomal_L11"/>
    <property type="match status" value="1"/>
</dbReference>
<dbReference type="FunFam" id="1.10.10.250:FF:000001">
    <property type="entry name" value="50S ribosomal protein L11"/>
    <property type="match status" value="1"/>
</dbReference>
<dbReference type="FunFam" id="3.30.1550.10:FF:000001">
    <property type="entry name" value="50S ribosomal protein L11"/>
    <property type="match status" value="1"/>
</dbReference>
<dbReference type="Gene3D" id="1.10.10.250">
    <property type="entry name" value="Ribosomal protein L11, C-terminal domain"/>
    <property type="match status" value="1"/>
</dbReference>
<dbReference type="Gene3D" id="3.30.1550.10">
    <property type="entry name" value="Ribosomal protein L11/L12, N-terminal domain"/>
    <property type="match status" value="1"/>
</dbReference>
<dbReference type="HAMAP" id="MF_00736">
    <property type="entry name" value="Ribosomal_uL11"/>
    <property type="match status" value="1"/>
</dbReference>
<dbReference type="InterPro" id="IPR000911">
    <property type="entry name" value="Ribosomal_uL11"/>
</dbReference>
<dbReference type="InterPro" id="IPR006519">
    <property type="entry name" value="Ribosomal_uL11_bac-typ"/>
</dbReference>
<dbReference type="InterPro" id="IPR020783">
    <property type="entry name" value="Ribosomal_uL11_C"/>
</dbReference>
<dbReference type="InterPro" id="IPR036769">
    <property type="entry name" value="Ribosomal_uL11_C_sf"/>
</dbReference>
<dbReference type="InterPro" id="IPR020785">
    <property type="entry name" value="Ribosomal_uL11_CS"/>
</dbReference>
<dbReference type="InterPro" id="IPR020784">
    <property type="entry name" value="Ribosomal_uL11_N"/>
</dbReference>
<dbReference type="InterPro" id="IPR036796">
    <property type="entry name" value="Ribosomal_uL11_N_sf"/>
</dbReference>
<dbReference type="NCBIfam" id="TIGR01632">
    <property type="entry name" value="L11_bact"/>
    <property type="match status" value="1"/>
</dbReference>
<dbReference type="PANTHER" id="PTHR11661">
    <property type="entry name" value="60S RIBOSOMAL PROTEIN L12"/>
    <property type="match status" value="1"/>
</dbReference>
<dbReference type="PANTHER" id="PTHR11661:SF1">
    <property type="entry name" value="LARGE RIBOSOMAL SUBUNIT PROTEIN UL11M"/>
    <property type="match status" value="1"/>
</dbReference>
<dbReference type="Pfam" id="PF00298">
    <property type="entry name" value="Ribosomal_L11"/>
    <property type="match status" value="1"/>
</dbReference>
<dbReference type="Pfam" id="PF03946">
    <property type="entry name" value="Ribosomal_L11_N"/>
    <property type="match status" value="1"/>
</dbReference>
<dbReference type="SMART" id="SM00649">
    <property type="entry name" value="RL11"/>
    <property type="match status" value="1"/>
</dbReference>
<dbReference type="SUPFAM" id="SSF54747">
    <property type="entry name" value="Ribosomal L11/L12e N-terminal domain"/>
    <property type="match status" value="1"/>
</dbReference>
<dbReference type="SUPFAM" id="SSF46906">
    <property type="entry name" value="Ribosomal protein L11, C-terminal domain"/>
    <property type="match status" value="1"/>
</dbReference>
<dbReference type="PROSITE" id="PS00359">
    <property type="entry name" value="RIBOSOMAL_L11"/>
    <property type="match status" value="1"/>
</dbReference>
<name>RL11_LARHH</name>
<proteinExistence type="inferred from homology"/>